<feature type="chain" id="PRO_1000122424" description="Homoserine kinase">
    <location>
        <begin position="1"/>
        <end position="309"/>
    </location>
</feature>
<feature type="binding site" evidence="1">
    <location>
        <begin position="91"/>
        <end position="101"/>
    </location>
    <ligand>
        <name>ATP</name>
        <dbReference type="ChEBI" id="CHEBI:30616"/>
    </ligand>
</feature>
<evidence type="ECO:0000255" key="1">
    <source>
        <dbReference type="HAMAP-Rule" id="MF_00384"/>
    </source>
</evidence>
<comment type="function">
    <text evidence="1">Catalyzes the ATP-dependent phosphorylation of L-homoserine to L-homoserine phosphate.</text>
</comment>
<comment type="catalytic activity">
    <reaction evidence="1">
        <text>L-homoserine + ATP = O-phospho-L-homoserine + ADP + H(+)</text>
        <dbReference type="Rhea" id="RHEA:13985"/>
        <dbReference type="ChEBI" id="CHEBI:15378"/>
        <dbReference type="ChEBI" id="CHEBI:30616"/>
        <dbReference type="ChEBI" id="CHEBI:57476"/>
        <dbReference type="ChEBI" id="CHEBI:57590"/>
        <dbReference type="ChEBI" id="CHEBI:456216"/>
        <dbReference type="EC" id="2.7.1.39"/>
    </reaction>
</comment>
<comment type="pathway">
    <text evidence="1">Amino-acid biosynthesis; L-threonine biosynthesis; L-threonine from L-aspartate: step 4/5.</text>
</comment>
<comment type="subcellular location">
    <subcellularLocation>
        <location evidence="1">Cytoplasm</location>
    </subcellularLocation>
</comment>
<comment type="similarity">
    <text evidence="1">Belongs to the GHMP kinase family. Homoserine kinase subfamily.</text>
</comment>
<dbReference type="EC" id="2.7.1.39" evidence="1"/>
<dbReference type="EMBL" id="CU468135">
    <property type="protein sequence ID" value="CAO95745.1"/>
    <property type="molecule type" value="Genomic_DNA"/>
</dbReference>
<dbReference type="RefSeq" id="WP_012440447.1">
    <property type="nucleotide sequence ID" value="NC_010694.1"/>
</dbReference>
<dbReference type="SMR" id="B2VH20"/>
<dbReference type="STRING" id="465817.ETA_06990"/>
<dbReference type="KEGG" id="eta:ETA_06990"/>
<dbReference type="eggNOG" id="COG0083">
    <property type="taxonomic scope" value="Bacteria"/>
</dbReference>
<dbReference type="HOGENOM" id="CLU_041243_1_1_6"/>
<dbReference type="OrthoDB" id="9769912at2"/>
<dbReference type="UniPathway" id="UPA00050">
    <property type="reaction ID" value="UER00064"/>
</dbReference>
<dbReference type="Proteomes" id="UP000001726">
    <property type="component" value="Chromosome"/>
</dbReference>
<dbReference type="GO" id="GO:0005737">
    <property type="term" value="C:cytoplasm"/>
    <property type="evidence" value="ECO:0007669"/>
    <property type="project" value="UniProtKB-SubCell"/>
</dbReference>
<dbReference type="GO" id="GO:0005524">
    <property type="term" value="F:ATP binding"/>
    <property type="evidence" value="ECO:0007669"/>
    <property type="project" value="UniProtKB-UniRule"/>
</dbReference>
<dbReference type="GO" id="GO:0004413">
    <property type="term" value="F:homoserine kinase activity"/>
    <property type="evidence" value="ECO:0007669"/>
    <property type="project" value="UniProtKB-UniRule"/>
</dbReference>
<dbReference type="GO" id="GO:0009088">
    <property type="term" value="P:threonine biosynthetic process"/>
    <property type="evidence" value="ECO:0007669"/>
    <property type="project" value="UniProtKB-UniRule"/>
</dbReference>
<dbReference type="FunFam" id="3.30.230.10:FF:000020">
    <property type="entry name" value="Homoserine kinase"/>
    <property type="match status" value="1"/>
</dbReference>
<dbReference type="Gene3D" id="3.30.230.10">
    <property type="match status" value="1"/>
</dbReference>
<dbReference type="Gene3D" id="3.30.70.890">
    <property type="entry name" value="GHMP kinase, C-terminal domain"/>
    <property type="match status" value="1"/>
</dbReference>
<dbReference type="HAMAP" id="MF_00384">
    <property type="entry name" value="Homoser_kinase"/>
    <property type="match status" value="1"/>
</dbReference>
<dbReference type="InterPro" id="IPR013750">
    <property type="entry name" value="GHMP_kinase_C_dom"/>
</dbReference>
<dbReference type="InterPro" id="IPR036554">
    <property type="entry name" value="GHMP_kinase_C_sf"/>
</dbReference>
<dbReference type="InterPro" id="IPR006204">
    <property type="entry name" value="GHMP_kinase_N_dom"/>
</dbReference>
<dbReference type="InterPro" id="IPR006203">
    <property type="entry name" value="GHMP_knse_ATP-bd_CS"/>
</dbReference>
<dbReference type="InterPro" id="IPR000870">
    <property type="entry name" value="Homoserine_kinase"/>
</dbReference>
<dbReference type="InterPro" id="IPR020568">
    <property type="entry name" value="Ribosomal_Su5_D2-typ_SF"/>
</dbReference>
<dbReference type="InterPro" id="IPR014721">
    <property type="entry name" value="Ribsml_uS5_D2-typ_fold_subgr"/>
</dbReference>
<dbReference type="NCBIfam" id="NF002288">
    <property type="entry name" value="PRK01212.1-4"/>
    <property type="match status" value="1"/>
</dbReference>
<dbReference type="NCBIfam" id="TIGR00191">
    <property type="entry name" value="thrB"/>
    <property type="match status" value="1"/>
</dbReference>
<dbReference type="PANTHER" id="PTHR20861:SF1">
    <property type="entry name" value="HOMOSERINE KINASE"/>
    <property type="match status" value="1"/>
</dbReference>
<dbReference type="PANTHER" id="PTHR20861">
    <property type="entry name" value="HOMOSERINE/4-DIPHOSPHOCYTIDYL-2-C-METHYL-D-ERYTHRITOL KINASE"/>
    <property type="match status" value="1"/>
</dbReference>
<dbReference type="Pfam" id="PF08544">
    <property type="entry name" value="GHMP_kinases_C"/>
    <property type="match status" value="1"/>
</dbReference>
<dbReference type="Pfam" id="PF00288">
    <property type="entry name" value="GHMP_kinases_N"/>
    <property type="match status" value="1"/>
</dbReference>
<dbReference type="PIRSF" id="PIRSF000676">
    <property type="entry name" value="Homoser_kin"/>
    <property type="match status" value="1"/>
</dbReference>
<dbReference type="PRINTS" id="PR00958">
    <property type="entry name" value="HOMSERKINASE"/>
</dbReference>
<dbReference type="SUPFAM" id="SSF55060">
    <property type="entry name" value="GHMP Kinase, C-terminal domain"/>
    <property type="match status" value="1"/>
</dbReference>
<dbReference type="SUPFAM" id="SSF54211">
    <property type="entry name" value="Ribosomal protein S5 domain 2-like"/>
    <property type="match status" value="1"/>
</dbReference>
<dbReference type="PROSITE" id="PS00627">
    <property type="entry name" value="GHMP_KINASES_ATP"/>
    <property type="match status" value="1"/>
</dbReference>
<reference key="1">
    <citation type="journal article" date="2008" name="Environ. Microbiol.">
        <title>The genome of Erwinia tasmaniensis strain Et1/99, a non-pathogenic bacterium in the genus Erwinia.</title>
        <authorList>
            <person name="Kube M."/>
            <person name="Migdoll A.M."/>
            <person name="Mueller I."/>
            <person name="Kuhl H."/>
            <person name="Beck A."/>
            <person name="Reinhardt R."/>
            <person name="Geider K."/>
        </authorList>
    </citation>
    <scope>NUCLEOTIDE SEQUENCE [LARGE SCALE GENOMIC DNA]</scope>
    <source>
        <strain>DSM 17950 / CFBP 7177 / CIP 109463 / NCPPB 4357 / Et1/99</strain>
    </source>
</reference>
<keyword id="KW-0028">Amino-acid biosynthesis</keyword>
<keyword id="KW-0067">ATP-binding</keyword>
<keyword id="KW-0963">Cytoplasm</keyword>
<keyword id="KW-0418">Kinase</keyword>
<keyword id="KW-0547">Nucleotide-binding</keyword>
<keyword id="KW-1185">Reference proteome</keyword>
<keyword id="KW-0791">Threonine biosynthesis</keyword>
<keyword id="KW-0808">Transferase</keyword>
<proteinExistence type="inferred from homology"/>
<organism>
    <name type="scientific">Erwinia tasmaniensis (strain DSM 17950 / CFBP 7177 / CIP 109463 / NCPPB 4357 / Et1/99)</name>
    <dbReference type="NCBI Taxonomy" id="465817"/>
    <lineage>
        <taxon>Bacteria</taxon>
        <taxon>Pseudomonadati</taxon>
        <taxon>Pseudomonadota</taxon>
        <taxon>Gammaproteobacteria</taxon>
        <taxon>Enterobacterales</taxon>
        <taxon>Erwiniaceae</taxon>
        <taxon>Erwinia</taxon>
    </lineage>
</organism>
<protein>
    <recommendedName>
        <fullName evidence="1">Homoserine kinase</fullName>
        <shortName evidence="1">HK</shortName>
        <shortName evidence="1">HSK</shortName>
        <ecNumber evidence="1">2.7.1.39</ecNumber>
    </recommendedName>
</protein>
<accession>B2VH20</accession>
<name>KHSE_ERWT9</name>
<sequence>MVKIYAPASIGNVSVGFDVLGAAVSPVDGTLLGDCVSVEAAAEFSLRNEGRFVSKLPADPKDNIVYQCWDRFCSAIGQRVPVAMTLEKNMPIGSGLGSSACSVVAGLMAMNEYCNRPLNNNELLILMGELEGRVSGSVHFDNVAPCFLGGMQLMLEENDIISQPVPGFNDWLWVMAYPGIKVSTAEARAILPAQYRKEEIIRHGRYLGGFIHACHTQQPLLAAKLMQDVIAEPYRTKLLPGFAQARQAAADIGALACGISGSGPTLFAVCNQPDTANRMADWLSQHYLQNDEGFVHICRLDTAGARKLG</sequence>
<gene>
    <name evidence="1" type="primary">thrB</name>
    <name type="ordered locus">ETA_06990</name>
</gene>